<evidence type="ECO:0000255" key="1">
    <source>
        <dbReference type="HAMAP-Rule" id="MF_00505"/>
    </source>
</evidence>
<evidence type="ECO:0000256" key="2">
    <source>
        <dbReference type="SAM" id="MobiDB-lite"/>
    </source>
</evidence>
<proteinExistence type="inferred from homology"/>
<gene>
    <name evidence="1" type="primary">htpG</name>
    <name type="ordered locus">CLD_2640</name>
</gene>
<feature type="chain" id="PRO_1000127025" description="Chaperone protein HtpG">
    <location>
        <begin position="1"/>
        <end position="626"/>
    </location>
</feature>
<feature type="region of interest" description="A; substrate-binding" evidence="1">
    <location>
        <begin position="1"/>
        <end position="341"/>
    </location>
</feature>
<feature type="region of interest" description="B" evidence="1">
    <location>
        <begin position="342"/>
        <end position="552"/>
    </location>
</feature>
<feature type="region of interest" description="Disordered" evidence="2">
    <location>
        <begin position="490"/>
        <end position="509"/>
    </location>
</feature>
<feature type="region of interest" description="C" evidence="1">
    <location>
        <begin position="553"/>
        <end position="626"/>
    </location>
</feature>
<feature type="compositionally biased region" description="Basic and acidic residues" evidence="2">
    <location>
        <begin position="498"/>
        <end position="509"/>
    </location>
</feature>
<keyword id="KW-0067">ATP-binding</keyword>
<keyword id="KW-0143">Chaperone</keyword>
<keyword id="KW-0963">Cytoplasm</keyword>
<keyword id="KW-0547">Nucleotide-binding</keyword>
<keyword id="KW-0346">Stress response</keyword>
<sequence length="626" mass="72764">METKQFKAESKRLLDLMINSIYTHKEIFLRELISNSSDAIDKIYYKTLTDDSLKFERDDYYIKVVSDKENRVLKIADTGIGMTKEELENNLGVIAKSGSLQFKKENEVKEGYDIIGQFGVGFYSAFLVSDDVTVISKAFGSNEAYKWNSKGAEGYTIEPCEKEAYGTEIILKIKDNTEEENYDEFLEEYTLKSIIKKYSDFIRYPIKMDLTKTKPKEDNKEEFEEYKEEETINSMVPIWRKNKNELKAEDYENFYAEKHYGFDKPIKYIHTSVDGVVSYNAILFIPETTPYDFYTKEYEKGLELYSSGVLIMNKCGDLLPDYFGFVKGIVDSEDLSLNISREILQHDRQLKLIAKNIKTKIKNELESLLKKERDKYEKFYESFGRQLKYGVYSDFGSNKDILQDLLMFYSSKEKKMVTLAEYVSRMPEDQKYIYYAVGESNERIEKLPQIEGVLDKGYEVLYFTDDIDEFAIKMLMNYKEKEFKSVSSGDLGIEGEEKENTSSSDDKENKELFESMKDILSGKVKDVRASKRLKNHPVCLANEGELSIEMEKVLNAMPNNQNIKADKVLEININHDVFKSLKEAYEGDKEKLKLYTDLLYNQALLIEGLAINDPVEFTNNICKIMK</sequence>
<name>HTPG_CLOBK</name>
<accession>B1IN79</accession>
<protein>
    <recommendedName>
        <fullName evidence="1">Chaperone protein HtpG</fullName>
    </recommendedName>
    <alternativeName>
        <fullName evidence="1">Heat shock protein HtpG</fullName>
    </alternativeName>
    <alternativeName>
        <fullName evidence="1">High temperature protein G</fullName>
    </alternativeName>
</protein>
<comment type="function">
    <text evidence="1">Molecular chaperone. Has ATPase activity.</text>
</comment>
<comment type="subunit">
    <text evidence="1">Homodimer.</text>
</comment>
<comment type="subcellular location">
    <subcellularLocation>
        <location evidence="1">Cytoplasm</location>
    </subcellularLocation>
</comment>
<comment type="similarity">
    <text evidence="1">Belongs to the heat shock protein 90 family.</text>
</comment>
<organism>
    <name type="scientific">Clostridium botulinum (strain Okra / Type B1)</name>
    <dbReference type="NCBI Taxonomy" id="498213"/>
    <lineage>
        <taxon>Bacteria</taxon>
        <taxon>Bacillati</taxon>
        <taxon>Bacillota</taxon>
        <taxon>Clostridia</taxon>
        <taxon>Eubacteriales</taxon>
        <taxon>Clostridiaceae</taxon>
        <taxon>Clostridium</taxon>
    </lineage>
</organism>
<reference key="1">
    <citation type="journal article" date="2007" name="PLoS ONE">
        <title>Analysis of the neurotoxin complex genes in Clostridium botulinum A1-A4 and B1 strains: BoNT/A3, /Ba4 and /B1 clusters are located within plasmids.</title>
        <authorList>
            <person name="Smith T.J."/>
            <person name="Hill K.K."/>
            <person name="Foley B.T."/>
            <person name="Detter J.C."/>
            <person name="Munk A.C."/>
            <person name="Bruce D.C."/>
            <person name="Doggett N.A."/>
            <person name="Smith L.A."/>
            <person name="Marks J.D."/>
            <person name="Xie G."/>
            <person name="Brettin T.S."/>
        </authorList>
    </citation>
    <scope>NUCLEOTIDE SEQUENCE [LARGE SCALE GENOMIC DNA]</scope>
    <source>
        <strain>Okra / Type B1</strain>
    </source>
</reference>
<dbReference type="EMBL" id="CP000939">
    <property type="protein sequence ID" value="ACA45545.1"/>
    <property type="molecule type" value="Genomic_DNA"/>
</dbReference>
<dbReference type="RefSeq" id="WP_003405400.1">
    <property type="nucleotide sequence ID" value="NC_010516.1"/>
</dbReference>
<dbReference type="SMR" id="B1IN79"/>
<dbReference type="KEGG" id="cbb:CLD_2640"/>
<dbReference type="HOGENOM" id="CLU_006684_3_0_9"/>
<dbReference type="Proteomes" id="UP000008541">
    <property type="component" value="Chromosome"/>
</dbReference>
<dbReference type="GO" id="GO:0005737">
    <property type="term" value="C:cytoplasm"/>
    <property type="evidence" value="ECO:0007669"/>
    <property type="project" value="UniProtKB-SubCell"/>
</dbReference>
<dbReference type="GO" id="GO:0005524">
    <property type="term" value="F:ATP binding"/>
    <property type="evidence" value="ECO:0007669"/>
    <property type="project" value="UniProtKB-UniRule"/>
</dbReference>
<dbReference type="GO" id="GO:0016887">
    <property type="term" value="F:ATP hydrolysis activity"/>
    <property type="evidence" value="ECO:0007669"/>
    <property type="project" value="InterPro"/>
</dbReference>
<dbReference type="GO" id="GO:0140662">
    <property type="term" value="F:ATP-dependent protein folding chaperone"/>
    <property type="evidence" value="ECO:0007669"/>
    <property type="project" value="InterPro"/>
</dbReference>
<dbReference type="GO" id="GO:0051082">
    <property type="term" value="F:unfolded protein binding"/>
    <property type="evidence" value="ECO:0007669"/>
    <property type="project" value="UniProtKB-UniRule"/>
</dbReference>
<dbReference type="CDD" id="cd16927">
    <property type="entry name" value="HATPase_Hsp90-like"/>
    <property type="match status" value="1"/>
</dbReference>
<dbReference type="FunFam" id="1.20.120.790:FF:000006">
    <property type="entry name" value="Chaperone protein HtpG"/>
    <property type="match status" value="1"/>
</dbReference>
<dbReference type="FunFam" id="3.40.50.11260:FF:000008">
    <property type="entry name" value="Chaperone protein HtpG"/>
    <property type="match status" value="1"/>
</dbReference>
<dbReference type="FunFam" id="3.30.565.10:FF:000054">
    <property type="entry name" value="Heat shock protein 90"/>
    <property type="match status" value="1"/>
</dbReference>
<dbReference type="FunFam" id="3.30.230.80:FF:000002">
    <property type="entry name" value="Molecular chaperone HtpG"/>
    <property type="match status" value="1"/>
</dbReference>
<dbReference type="Gene3D" id="3.30.230.80">
    <property type="match status" value="1"/>
</dbReference>
<dbReference type="Gene3D" id="3.40.50.11260">
    <property type="match status" value="1"/>
</dbReference>
<dbReference type="Gene3D" id="1.20.120.790">
    <property type="entry name" value="Heat shock protein 90, C-terminal domain"/>
    <property type="match status" value="1"/>
</dbReference>
<dbReference type="Gene3D" id="3.30.565.10">
    <property type="entry name" value="Histidine kinase-like ATPase, C-terminal domain"/>
    <property type="match status" value="1"/>
</dbReference>
<dbReference type="HAMAP" id="MF_00505">
    <property type="entry name" value="HSP90"/>
    <property type="match status" value="1"/>
</dbReference>
<dbReference type="InterPro" id="IPR036890">
    <property type="entry name" value="HATPase_C_sf"/>
</dbReference>
<dbReference type="InterPro" id="IPR019805">
    <property type="entry name" value="Heat_shock_protein_90_CS"/>
</dbReference>
<dbReference type="InterPro" id="IPR037196">
    <property type="entry name" value="HSP90_C"/>
</dbReference>
<dbReference type="InterPro" id="IPR001404">
    <property type="entry name" value="Hsp90_fam"/>
</dbReference>
<dbReference type="InterPro" id="IPR020575">
    <property type="entry name" value="Hsp90_N"/>
</dbReference>
<dbReference type="InterPro" id="IPR020568">
    <property type="entry name" value="Ribosomal_Su5_D2-typ_SF"/>
</dbReference>
<dbReference type="NCBIfam" id="NF003555">
    <property type="entry name" value="PRK05218.1"/>
    <property type="match status" value="1"/>
</dbReference>
<dbReference type="PANTHER" id="PTHR11528">
    <property type="entry name" value="HEAT SHOCK PROTEIN 90 FAMILY MEMBER"/>
    <property type="match status" value="1"/>
</dbReference>
<dbReference type="Pfam" id="PF13589">
    <property type="entry name" value="HATPase_c_3"/>
    <property type="match status" value="1"/>
</dbReference>
<dbReference type="Pfam" id="PF00183">
    <property type="entry name" value="HSP90"/>
    <property type="match status" value="2"/>
</dbReference>
<dbReference type="PIRSF" id="PIRSF002583">
    <property type="entry name" value="Hsp90"/>
    <property type="match status" value="1"/>
</dbReference>
<dbReference type="PRINTS" id="PR00775">
    <property type="entry name" value="HEATSHOCK90"/>
</dbReference>
<dbReference type="SUPFAM" id="SSF55874">
    <property type="entry name" value="ATPase domain of HSP90 chaperone/DNA topoisomerase II/histidine kinase"/>
    <property type="match status" value="1"/>
</dbReference>
<dbReference type="SUPFAM" id="SSF110942">
    <property type="entry name" value="HSP90 C-terminal domain"/>
    <property type="match status" value="1"/>
</dbReference>
<dbReference type="SUPFAM" id="SSF54211">
    <property type="entry name" value="Ribosomal protein S5 domain 2-like"/>
    <property type="match status" value="1"/>
</dbReference>
<dbReference type="PROSITE" id="PS00298">
    <property type="entry name" value="HSP90"/>
    <property type="match status" value="1"/>
</dbReference>